<accession>B7N924</accession>
<gene>
    <name evidence="1" type="primary">ybaB</name>
    <name type="ordered locus">ECUMN_0510</name>
</gene>
<sequence>MFGKGGLGNLMKQAQQMQEKMQKMQEEIAQLEVTGESGAGLVKVTINGAHNCRRVEIDPSLLEDDKEMLEDLVAAAFNDAARRIEETQKEKMASVSSGMQLPPGFKMPF</sequence>
<keyword id="KW-0963">Cytoplasm</keyword>
<keyword id="KW-0238">DNA-binding</keyword>
<proteinExistence type="inferred from homology"/>
<reference key="1">
    <citation type="journal article" date="2009" name="PLoS Genet.">
        <title>Organised genome dynamics in the Escherichia coli species results in highly diverse adaptive paths.</title>
        <authorList>
            <person name="Touchon M."/>
            <person name="Hoede C."/>
            <person name="Tenaillon O."/>
            <person name="Barbe V."/>
            <person name="Baeriswyl S."/>
            <person name="Bidet P."/>
            <person name="Bingen E."/>
            <person name="Bonacorsi S."/>
            <person name="Bouchier C."/>
            <person name="Bouvet O."/>
            <person name="Calteau A."/>
            <person name="Chiapello H."/>
            <person name="Clermont O."/>
            <person name="Cruveiller S."/>
            <person name="Danchin A."/>
            <person name="Diard M."/>
            <person name="Dossat C."/>
            <person name="Karoui M.E."/>
            <person name="Frapy E."/>
            <person name="Garry L."/>
            <person name="Ghigo J.M."/>
            <person name="Gilles A.M."/>
            <person name="Johnson J."/>
            <person name="Le Bouguenec C."/>
            <person name="Lescat M."/>
            <person name="Mangenot S."/>
            <person name="Martinez-Jehanne V."/>
            <person name="Matic I."/>
            <person name="Nassif X."/>
            <person name="Oztas S."/>
            <person name="Petit M.A."/>
            <person name="Pichon C."/>
            <person name="Rouy Z."/>
            <person name="Ruf C.S."/>
            <person name="Schneider D."/>
            <person name="Tourret J."/>
            <person name="Vacherie B."/>
            <person name="Vallenet D."/>
            <person name="Medigue C."/>
            <person name="Rocha E.P.C."/>
            <person name="Denamur E."/>
        </authorList>
    </citation>
    <scope>NUCLEOTIDE SEQUENCE [LARGE SCALE GENOMIC DNA]</scope>
    <source>
        <strain>UMN026 / ExPEC</strain>
    </source>
</reference>
<feature type="chain" id="PRO_1000119321" description="Nucleoid-associated protein YbaB">
    <location>
        <begin position="1"/>
        <end position="109"/>
    </location>
</feature>
<evidence type="ECO:0000255" key="1">
    <source>
        <dbReference type="HAMAP-Rule" id="MF_00274"/>
    </source>
</evidence>
<organism>
    <name type="scientific">Escherichia coli O17:K52:H18 (strain UMN026 / ExPEC)</name>
    <dbReference type="NCBI Taxonomy" id="585056"/>
    <lineage>
        <taxon>Bacteria</taxon>
        <taxon>Pseudomonadati</taxon>
        <taxon>Pseudomonadota</taxon>
        <taxon>Gammaproteobacteria</taxon>
        <taxon>Enterobacterales</taxon>
        <taxon>Enterobacteriaceae</taxon>
        <taxon>Escherichia</taxon>
    </lineage>
</organism>
<protein>
    <recommendedName>
        <fullName evidence="1">Nucleoid-associated protein YbaB</fullName>
    </recommendedName>
</protein>
<comment type="function">
    <text evidence="1">Binds to DNA and alters its conformation. May be involved in regulation of gene expression, nucleoid organization and DNA protection.</text>
</comment>
<comment type="subunit">
    <text evidence="1">Homodimer.</text>
</comment>
<comment type="subcellular location">
    <subcellularLocation>
        <location evidence="1">Cytoplasm</location>
        <location evidence="1">Nucleoid</location>
    </subcellularLocation>
</comment>
<comment type="similarity">
    <text evidence="1">Belongs to the YbaB/EbfC family.</text>
</comment>
<name>YBAB_ECOLU</name>
<dbReference type="EMBL" id="CU928163">
    <property type="protein sequence ID" value="CAR11725.1"/>
    <property type="molecule type" value="Genomic_DNA"/>
</dbReference>
<dbReference type="RefSeq" id="WP_000467098.1">
    <property type="nucleotide sequence ID" value="NC_011751.1"/>
</dbReference>
<dbReference type="RefSeq" id="YP_002411273.1">
    <property type="nucleotide sequence ID" value="NC_011751.1"/>
</dbReference>
<dbReference type="SMR" id="B7N924"/>
<dbReference type="STRING" id="585056.ECUMN_0510"/>
<dbReference type="KEGG" id="eum:ECUMN_0510"/>
<dbReference type="PATRIC" id="fig|585056.7.peg.717"/>
<dbReference type="HOGENOM" id="CLU_140930_0_0_6"/>
<dbReference type="Proteomes" id="UP000007097">
    <property type="component" value="Chromosome"/>
</dbReference>
<dbReference type="GO" id="GO:0043590">
    <property type="term" value="C:bacterial nucleoid"/>
    <property type="evidence" value="ECO:0007669"/>
    <property type="project" value="UniProtKB-UniRule"/>
</dbReference>
<dbReference type="GO" id="GO:0005829">
    <property type="term" value="C:cytosol"/>
    <property type="evidence" value="ECO:0007669"/>
    <property type="project" value="TreeGrafter"/>
</dbReference>
<dbReference type="GO" id="GO:0003677">
    <property type="term" value="F:DNA binding"/>
    <property type="evidence" value="ECO:0007669"/>
    <property type="project" value="UniProtKB-UniRule"/>
</dbReference>
<dbReference type="FunFam" id="3.30.1310.10:FF:000001">
    <property type="entry name" value="Nucleoid-associated protein YbaB"/>
    <property type="match status" value="1"/>
</dbReference>
<dbReference type="Gene3D" id="3.30.1310.10">
    <property type="entry name" value="Nucleoid-associated protein YbaB-like domain"/>
    <property type="match status" value="1"/>
</dbReference>
<dbReference type="HAMAP" id="MF_00274">
    <property type="entry name" value="DNA_YbaB_EbfC"/>
    <property type="match status" value="1"/>
</dbReference>
<dbReference type="InterPro" id="IPR036894">
    <property type="entry name" value="YbaB-like_sf"/>
</dbReference>
<dbReference type="InterPro" id="IPR004401">
    <property type="entry name" value="YbaB/EbfC"/>
</dbReference>
<dbReference type="NCBIfam" id="TIGR00103">
    <property type="entry name" value="DNA_YbaB_EbfC"/>
    <property type="match status" value="1"/>
</dbReference>
<dbReference type="PANTHER" id="PTHR33449">
    <property type="entry name" value="NUCLEOID-ASSOCIATED PROTEIN YBAB"/>
    <property type="match status" value="1"/>
</dbReference>
<dbReference type="PANTHER" id="PTHR33449:SF1">
    <property type="entry name" value="NUCLEOID-ASSOCIATED PROTEIN YBAB"/>
    <property type="match status" value="1"/>
</dbReference>
<dbReference type="Pfam" id="PF02575">
    <property type="entry name" value="YbaB_DNA_bd"/>
    <property type="match status" value="1"/>
</dbReference>
<dbReference type="PIRSF" id="PIRSF004555">
    <property type="entry name" value="UCP004555"/>
    <property type="match status" value="1"/>
</dbReference>
<dbReference type="SUPFAM" id="SSF82607">
    <property type="entry name" value="YbaB-like"/>
    <property type="match status" value="1"/>
</dbReference>